<protein>
    <recommendedName>
        <fullName evidence="1">Ferredoxin-type protein NapF</fullName>
    </recommendedName>
</protein>
<evidence type="ECO:0000255" key="1">
    <source>
        <dbReference type="HAMAP-Rule" id="MF_02201"/>
    </source>
</evidence>
<evidence type="ECO:0000255" key="2">
    <source>
        <dbReference type="PROSITE-ProRule" id="PRU00711"/>
    </source>
</evidence>
<comment type="function">
    <text evidence="1">Could be involved in the maturation of NapA, the catalytic subunit of the periplasmic nitrate reductase, before its export into the periplasm.</text>
</comment>
<comment type="cofactor">
    <cofactor evidence="1">
        <name>[4Fe-4S] cluster</name>
        <dbReference type="ChEBI" id="CHEBI:49883"/>
    </cofactor>
    <text evidence="2">Binds 3 [4Fe-4S] cluster.</text>
</comment>
<comment type="subunit">
    <text evidence="1">Interacts with the cytoplasmic NapA precursor.</text>
</comment>
<comment type="subcellular location">
    <subcellularLocation>
        <location evidence="1">Cytoplasm</location>
    </subcellularLocation>
</comment>
<comment type="similarity">
    <text evidence="1">Belongs to the NapF family.</text>
</comment>
<dbReference type="EMBL" id="AE014075">
    <property type="protein sequence ID" value="AAN81201.1"/>
    <property type="molecule type" value="Genomic_DNA"/>
</dbReference>
<dbReference type="RefSeq" id="WP_000686723.1">
    <property type="nucleotide sequence ID" value="NZ_CP051263.1"/>
</dbReference>
<dbReference type="STRING" id="199310.c2747"/>
<dbReference type="GeneID" id="93774970"/>
<dbReference type="KEGG" id="ecc:c2747"/>
<dbReference type="eggNOG" id="COG1145">
    <property type="taxonomic scope" value="Bacteria"/>
</dbReference>
<dbReference type="eggNOG" id="COG1149">
    <property type="taxonomic scope" value="Bacteria"/>
</dbReference>
<dbReference type="HOGENOM" id="CLU_077329_2_1_6"/>
<dbReference type="BioCyc" id="ECOL199310:C2747-MONOMER"/>
<dbReference type="Proteomes" id="UP000001410">
    <property type="component" value="Chromosome"/>
</dbReference>
<dbReference type="GO" id="GO:0005737">
    <property type="term" value="C:cytoplasm"/>
    <property type="evidence" value="ECO:0007669"/>
    <property type="project" value="UniProtKB-SubCell"/>
</dbReference>
<dbReference type="GO" id="GO:0051539">
    <property type="term" value="F:4 iron, 4 sulfur cluster binding"/>
    <property type="evidence" value="ECO:0007669"/>
    <property type="project" value="UniProtKB-UniRule"/>
</dbReference>
<dbReference type="GO" id="GO:0046872">
    <property type="term" value="F:metal ion binding"/>
    <property type="evidence" value="ECO:0007669"/>
    <property type="project" value="UniProtKB-KW"/>
</dbReference>
<dbReference type="CDD" id="cd10564">
    <property type="entry name" value="NapF_like"/>
    <property type="match status" value="1"/>
</dbReference>
<dbReference type="FunFam" id="3.30.70.20:FF:000024">
    <property type="entry name" value="Ferredoxin-type protein NapF"/>
    <property type="match status" value="1"/>
</dbReference>
<dbReference type="FunFam" id="3.30.70.20:FF:000025">
    <property type="entry name" value="Ferredoxin-type protein NapF"/>
    <property type="match status" value="1"/>
</dbReference>
<dbReference type="Gene3D" id="3.30.70.20">
    <property type="match status" value="2"/>
</dbReference>
<dbReference type="HAMAP" id="MF_02201">
    <property type="entry name" value="NapF"/>
    <property type="match status" value="1"/>
</dbReference>
<dbReference type="InterPro" id="IPR017896">
    <property type="entry name" value="4Fe4S_Fe-S-bd"/>
</dbReference>
<dbReference type="InterPro" id="IPR017900">
    <property type="entry name" value="4Fe4S_Fe_S_CS"/>
</dbReference>
<dbReference type="InterPro" id="IPR050572">
    <property type="entry name" value="Fe-S_Ferredoxin"/>
</dbReference>
<dbReference type="InterPro" id="IPR004496">
    <property type="entry name" value="NapF"/>
</dbReference>
<dbReference type="NCBIfam" id="TIGR00402">
    <property type="entry name" value="napF"/>
    <property type="match status" value="1"/>
</dbReference>
<dbReference type="PANTHER" id="PTHR43687">
    <property type="entry name" value="ADENYLYLSULFATE REDUCTASE, BETA SUBUNIT"/>
    <property type="match status" value="1"/>
</dbReference>
<dbReference type="PANTHER" id="PTHR43687:SF1">
    <property type="entry name" value="FERREDOXIN III"/>
    <property type="match status" value="1"/>
</dbReference>
<dbReference type="Pfam" id="PF12838">
    <property type="entry name" value="Fer4_7"/>
    <property type="match status" value="1"/>
</dbReference>
<dbReference type="Pfam" id="PF13187">
    <property type="entry name" value="Fer4_9"/>
    <property type="match status" value="1"/>
</dbReference>
<dbReference type="SUPFAM" id="SSF54862">
    <property type="entry name" value="4Fe-4S ferredoxins"/>
    <property type="match status" value="1"/>
</dbReference>
<dbReference type="PROSITE" id="PS00198">
    <property type="entry name" value="4FE4S_FER_1"/>
    <property type="match status" value="3"/>
</dbReference>
<dbReference type="PROSITE" id="PS51379">
    <property type="entry name" value="4FE4S_FER_2"/>
    <property type="match status" value="3"/>
</dbReference>
<organism>
    <name type="scientific">Escherichia coli O6:H1 (strain CFT073 / ATCC 700928 / UPEC)</name>
    <dbReference type="NCBI Taxonomy" id="199310"/>
    <lineage>
        <taxon>Bacteria</taxon>
        <taxon>Pseudomonadati</taxon>
        <taxon>Pseudomonadota</taxon>
        <taxon>Gammaproteobacteria</taxon>
        <taxon>Enterobacterales</taxon>
        <taxon>Enterobacteriaceae</taxon>
        <taxon>Escherichia</taxon>
    </lineage>
</organism>
<keyword id="KW-0004">4Fe-4S</keyword>
<keyword id="KW-0963">Cytoplasm</keyword>
<keyword id="KW-0408">Iron</keyword>
<keyword id="KW-0411">Iron-sulfur</keyword>
<keyword id="KW-0479">Metal-binding</keyword>
<keyword id="KW-1185">Reference proteome</keyword>
<keyword id="KW-0677">Repeat</keyword>
<gene>
    <name evidence="1" type="primary">napF</name>
    <name type="ordered locus">c2747</name>
</gene>
<reference key="1">
    <citation type="journal article" date="2002" name="Proc. Natl. Acad. Sci. U.S.A.">
        <title>Extensive mosaic structure revealed by the complete genome sequence of uropathogenic Escherichia coli.</title>
        <authorList>
            <person name="Welch R.A."/>
            <person name="Burland V."/>
            <person name="Plunkett G. III"/>
            <person name="Redford P."/>
            <person name="Roesch P."/>
            <person name="Rasko D."/>
            <person name="Buckles E.L."/>
            <person name="Liou S.-R."/>
            <person name="Boutin A."/>
            <person name="Hackett J."/>
            <person name="Stroud D."/>
            <person name="Mayhew G.F."/>
            <person name="Rose D.J."/>
            <person name="Zhou S."/>
            <person name="Schwartz D.C."/>
            <person name="Perna N.T."/>
            <person name="Mobley H.L.T."/>
            <person name="Donnenberg M.S."/>
            <person name="Blattner F.R."/>
        </authorList>
    </citation>
    <scope>NUCLEOTIDE SEQUENCE [LARGE SCALE GENOMIC DNA]</scope>
    <source>
        <strain>CFT073 / ATCC 700928 / UPEC</strain>
    </source>
</reference>
<accession>P0AAL1</accession>
<accession>P33939</accession>
<sequence>MKIDASRRGILTGRWRKASNGIRPPWSGDESHFLTHCTRCDACINACENNILQRGAGGYPSVNFKNNECSFCYACAQACPESLFSPRHTRAWDLQFTIGDACLAYQSVECRRCQDSCEPMAIIFRPTLSGIYQPQLNSQLCNGCGACAASCPVSAITAEYLHAH</sequence>
<name>NAPF_ECOL6</name>
<feature type="chain" id="PRO_0000159277" description="Ferredoxin-type protein NapF">
    <location>
        <begin position="1"/>
        <end position="164"/>
    </location>
</feature>
<feature type="domain" description="4Fe-4S ferredoxin-type 1" evidence="1">
    <location>
        <begin position="28"/>
        <end position="57"/>
    </location>
</feature>
<feature type="domain" description="4Fe-4S ferredoxin-type 2" evidence="1">
    <location>
        <begin position="58"/>
        <end position="89"/>
    </location>
</feature>
<feature type="domain" description="4Fe-4S ferredoxin-type 3" evidence="1">
    <location>
        <begin position="132"/>
        <end position="161"/>
    </location>
</feature>
<feature type="binding site" evidence="1">
    <location>
        <position position="37"/>
    </location>
    <ligand>
        <name>[4Fe-4S] cluster</name>
        <dbReference type="ChEBI" id="CHEBI:49883"/>
        <label>1</label>
    </ligand>
</feature>
<feature type="binding site" evidence="1">
    <location>
        <position position="40"/>
    </location>
    <ligand>
        <name>[4Fe-4S] cluster</name>
        <dbReference type="ChEBI" id="CHEBI:49883"/>
        <label>1</label>
    </ligand>
</feature>
<feature type="binding site" evidence="1">
    <location>
        <position position="43"/>
    </location>
    <ligand>
        <name>[4Fe-4S] cluster</name>
        <dbReference type="ChEBI" id="CHEBI:49883"/>
        <label>1</label>
    </ligand>
</feature>
<feature type="binding site" evidence="1">
    <location>
        <position position="47"/>
    </location>
    <ligand>
        <name>[4Fe-4S] cluster</name>
        <dbReference type="ChEBI" id="CHEBI:49883"/>
        <label>1</label>
    </ligand>
</feature>
<feature type="binding site" evidence="1">
    <location>
        <position position="69"/>
    </location>
    <ligand>
        <name>[4Fe-4S] cluster</name>
        <dbReference type="ChEBI" id="CHEBI:49883"/>
        <label>2</label>
    </ligand>
</feature>
<feature type="binding site" evidence="1">
    <location>
        <position position="72"/>
    </location>
    <ligand>
        <name>[4Fe-4S] cluster</name>
        <dbReference type="ChEBI" id="CHEBI:49883"/>
        <label>2</label>
    </ligand>
</feature>
<feature type="binding site" evidence="1">
    <location>
        <position position="75"/>
    </location>
    <ligand>
        <name>[4Fe-4S] cluster</name>
        <dbReference type="ChEBI" id="CHEBI:49883"/>
        <label>2</label>
    </ligand>
</feature>
<feature type="binding site" evidence="1">
    <location>
        <position position="79"/>
    </location>
    <ligand>
        <name>[4Fe-4S] cluster</name>
        <dbReference type="ChEBI" id="CHEBI:49883"/>
        <label>2</label>
    </ligand>
</feature>
<feature type="binding site" evidence="1">
    <location>
        <position position="141"/>
    </location>
    <ligand>
        <name>[4Fe-4S] cluster</name>
        <dbReference type="ChEBI" id="CHEBI:49883"/>
        <label>3</label>
    </ligand>
</feature>
<feature type="binding site" evidence="1">
    <location>
        <position position="144"/>
    </location>
    <ligand>
        <name>[4Fe-4S] cluster</name>
        <dbReference type="ChEBI" id="CHEBI:49883"/>
        <label>3</label>
    </ligand>
</feature>
<feature type="binding site" evidence="1">
    <location>
        <position position="147"/>
    </location>
    <ligand>
        <name>[4Fe-4S] cluster</name>
        <dbReference type="ChEBI" id="CHEBI:49883"/>
        <label>3</label>
    </ligand>
</feature>
<feature type="binding site" evidence="1">
    <location>
        <position position="151"/>
    </location>
    <ligand>
        <name>[4Fe-4S] cluster</name>
        <dbReference type="ChEBI" id="CHEBI:49883"/>
        <label>3</label>
    </ligand>
</feature>
<proteinExistence type="inferred from homology"/>